<reference key="1">
    <citation type="journal article" date="2006" name="J. Bacteriol.">
        <title>Genome sequence of Aeromonas hydrophila ATCC 7966T: jack of all trades.</title>
        <authorList>
            <person name="Seshadri R."/>
            <person name="Joseph S.W."/>
            <person name="Chopra A.K."/>
            <person name="Sha J."/>
            <person name="Shaw J."/>
            <person name="Graf J."/>
            <person name="Haft D.H."/>
            <person name="Wu M."/>
            <person name="Ren Q."/>
            <person name="Rosovitz M.J."/>
            <person name="Madupu R."/>
            <person name="Tallon L."/>
            <person name="Kim M."/>
            <person name="Jin S."/>
            <person name="Vuong H."/>
            <person name="Stine O.C."/>
            <person name="Ali A."/>
            <person name="Horneman A.J."/>
            <person name="Heidelberg J.F."/>
        </authorList>
    </citation>
    <scope>NUCLEOTIDE SEQUENCE [LARGE SCALE GENOMIC DNA]</scope>
    <source>
        <strain>ATCC 7966 / DSM 30187 / BCRC 13018 / CCUG 14551 / JCM 1027 / KCTC 2358 / NCIMB 9240 / NCTC 8049</strain>
    </source>
</reference>
<sequence length="249" mass="27829">MHTKDQIFAAPIARLGDFCFDEQVVDVFPDMIQRSVPGYSNIISAIGMMAARYAQPQSRLYDLGCSLGAATQAMRRHVTQPGCHITAVDLSHPMIERARAHLSGFKSEVPVELVEADICDIAIENASVVVLNFTLQFVEPEKRAALIQRIFDGLRPGGILILSEKFRFEDAPVNELLIDLHLDFKRANGYSELEISQKRTALENVMRTDSLPVHQARLRDAGFAHQDLWFQCFNFGSMIAIKSSEPAQP</sequence>
<protein>
    <recommendedName>
        <fullName evidence="1">Carboxy-S-adenosyl-L-methionine synthase</fullName>
        <shortName evidence="1">Cx-SAM synthase</shortName>
        <ecNumber evidence="1">2.1.3.-</ecNumber>
    </recommendedName>
</protein>
<keyword id="KW-1185">Reference proteome</keyword>
<keyword id="KW-0949">S-adenosyl-L-methionine</keyword>
<keyword id="KW-0808">Transferase</keyword>
<name>CMOA_AERHH</name>
<evidence type="ECO:0000255" key="1">
    <source>
        <dbReference type="HAMAP-Rule" id="MF_01589"/>
    </source>
</evidence>
<accession>A0KIF6</accession>
<proteinExistence type="inferred from homology"/>
<organism>
    <name type="scientific">Aeromonas hydrophila subsp. hydrophila (strain ATCC 7966 / DSM 30187 / BCRC 13018 / CCUG 14551 / JCM 1027 / KCTC 2358 / NCIMB 9240 / NCTC 8049)</name>
    <dbReference type="NCBI Taxonomy" id="380703"/>
    <lineage>
        <taxon>Bacteria</taxon>
        <taxon>Pseudomonadati</taxon>
        <taxon>Pseudomonadota</taxon>
        <taxon>Gammaproteobacteria</taxon>
        <taxon>Aeromonadales</taxon>
        <taxon>Aeromonadaceae</taxon>
        <taxon>Aeromonas</taxon>
    </lineage>
</organism>
<feature type="chain" id="PRO_0000314308" description="Carboxy-S-adenosyl-L-methionine synthase">
    <location>
        <begin position="1"/>
        <end position="249"/>
    </location>
</feature>
<feature type="binding site" evidence="1">
    <location>
        <position position="39"/>
    </location>
    <ligand>
        <name>S-adenosyl-L-methionine</name>
        <dbReference type="ChEBI" id="CHEBI:59789"/>
    </ligand>
</feature>
<feature type="binding site" evidence="1">
    <location>
        <begin position="64"/>
        <end position="66"/>
    </location>
    <ligand>
        <name>S-adenosyl-L-methionine</name>
        <dbReference type="ChEBI" id="CHEBI:59789"/>
    </ligand>
</feature>
<feature type="binding site" evidence="1">
    <location>
        <begin position="117"/>
        <end position="118"/>
    </location>
    <ligand>
        <name>S-adenosyl-L-methionine</name>
        <dbReference type="ChEBI" id="CHEBI:59789"/>
    </ligand>
</feature>
<feature type="binding site" evidence="1">
    <location>
        <position position="132"/>
    </location>
    <ligand>
        <name>S-adenosyl-L-methionine</name>
        <dbReference type="ChEBI" id="CHEBI:59789"/>
    </ligand>
</feature>
<feature type="binding site" evidence="1">
    <location>
        <position position="199"/>
    </location>
    <ligand>
        <name>S-adenosyl-L-methionine</name>
        <dbReference type="ChEBI" id="CHEBI:59789"/>
    </ligand>
</feature>
<comment type="function">
    <text evidence="1">Catalyzes the conversion of S-adenosyl-L-methionine (SAM) to carboxy-S-adenosyl-L-methionine (Cx-SAM).</text>
</comment>
<comment type="catalytic activity">
    <reaction evidence="1">
        <text>prephenate + S-adenosyl-L-methionine = carboxy-S-adenosyl-L-methionine + 3-phenylpyruvate + H2O</text>
        <dbReference type="Rhea" id="RHEA:51692"/>
        <dbReference type="ChEBI" id="CHEBI:15377"/>
        <dbReference type="ChEBI" id="CHEBI:18005"/>
        <dbReference type="ChEBI" id="CHEBI:29934"/>
        <dbReference type="ChEBI" id="CHEBI:59789"/>
        <dbReference type="ChEBI" id="CHEBI:134278"/>
    </reaction>
</comment>
<comment type="subunit">
    <text evidence="1">Homodimer.</text>
</comment>
<comment type="similarity">
    <text evidence="1">Belongs to the class I-like SAM-binding methyltransferase superfamily. Cx-SAM synthase family.</text>
</comment>
<gene>
    <name evidence="1" type="primary">cmoA</name>
    <name type="ordered locus">AHA_1519</name>
</gene>
<dbReference type="EC" id="2.1.3.-" evidence="1"/>
<dbReference type="EMBL" id="CP000462">
    <property type="protein sequence ID" value="ABK38915.1"/>
    <property type="molecule type" value="Genomic_DNA"/>
</dbReference>
<dbReference type="RefSeq" id="WP_011705416.1">
    <property type="nucleotide sequence ID" value="NC_008570.1"/>
</dbReference>
<dbReference type="RefSeq" id="YP_856057.1">
    <property type="nucleotide sequence ID" value="NC_008570.1"/>
</dbReference>
<dbReference type="SMR" id="A0KIF6"/>
<dbReference type="STRING" id="380703.AHA_1519"/>
<dbReference type="EnsemblBacteria" id="ABK38915">
    <property type="protein sequence ID" value="ABK38915"/>
    <property type="gene ID" value="AHA_1519"/>
</dbReference>
<dbReference type="GeneID" id="4487592"/>
<dbReference type="KEGG" id="aha:AHA_1519"/>
<dbReference type="PATRIC" id="fig|380703.7.peg.1532"/>
<dbReference type="eggNOG" id="COG4106">
    <property type="taxonomic scope" value="Bacteria"/>
</dbReference>
<dbReference type="HOGENOM" id="CLU_078475_0_0_6"/>
<dbReference type="OrthoDB" id="9779941at2"/>
<dbReference type="Proteomes" id="UP000000756">
    <property type="component" value="Chromosome"/>
</dbReference>
<dbReference type="GO" id="GO:0016743">
    <property type="term" value="F:carboxyl- or carbamoyltransferase activity"/>
    <property type="evidence" value="ECO:0007669"/>
    <property type="project" value="UniProtKB-UniRule"/>
</dbReference>
<dbReference type="GO" id="GO:1904047">
    <property type="term" value="F:S-adenosyl-L-methionine binding"/>
    <property type="evidence" value="ECO:0007669"/>
    <property type="project" value="UniProtKB-UniRule"/>
</dbReference>
<dbReference type="GO" id="GO:0002098">
    <property type="term" value="P:tRNA wobble uridine modification"/>
    <property type="evidence" value="ECO:0007669"/>
    <property type="project" value="InterPro"/>
</dbReference>
<dbReference type="CDD" id="cd02440">
    <property type="entry name" value="AdoMet_MTases"/>
    <property type="match status" value="1"/>
</dbReference>
<dbReference type="Gene3D" id="3.40.50.150">
    <property type="entry name" value="Vaccinia Virus protein VP39"/>
    <property type="match status" value="1"/>
</dbReference>
<dbReference type="HAMAP" id="MF_01589">
    <property type="entry name" value="Cx_SAM_synthase"/>
    <property type="match status" value="1"/>
</dbReference>
<dbReference type="InterPro" id="IPR005271">
    <property type="entry name" value="CmoA"/>
</dbReference>
<dbReference type="InterPro" id="IPR041698">
    <property type="entry name" value="Methyltransf_25"/>
</dbReference>
<dbReference type="InterPro" id="IPR029063">
    <property type="entry name" value="SAM-dependent_MTases_sf"/>
</dbReference>
<dbReference type="NCBIfam" id="TIGR00740">
    <property type="entry name" value="carboxy-S-adenosyl-L-methionine synthase CmoA"/>
    <property type="match status" value="1"/>
</dbReference>
<dbReference type="NCBIfam" id="NF011995">
    <property type="entry name" value="PRK15451.1"/>
    <property type="match status" value="1"/>
</dbReference>
<dbReference type="PANTHER" id="PTHR43861:SF2">
    <property type="entry name" value="CARBOXY-S-ADENOSYL-L-METHIONINE SYNTHASE"/>
    <property type="match status" value="1"/>
</dbReference>
<dbReference type="PANTHER" id="PTHR43861">
    <property type="entry name" value="TRANS-ACONITATE 2-METHYLTRANSFERASE-RELATED"/>
    <property type="match status" value="1"/>
</dbReference>
<dbReference type="Pfam" id="PF13649">
    <property type="entry name" value="Methyltransf_25"/>
    <property type="match status" value="1"/>
</dbReference>
<dbReference type="PIRSF" id="PIRSF006325">
    <property type="entry name" value="MeTrfase_bac"/>
    <property type="match status" value="1"/>
</dbReference>
<dbReference type="SUPFAM" id="SSF53335">
    <property type="entry name" value="S-adenosyl-L-methionine-dependent methyltransferases"/>
    <property type="match status" value="1"/>
</dbReference>